<feature type="chain" id="PRO_0000191771" description="Glycosylphosphatidylinositol anchor biosynthesis protein 11">
    <location>
        <begin position="1"/>
        <end position="219"/>
    </location>
</feature>
<feature type="topological domain" description="Cytoplasmic" evidence="1">
    <location>
        <begin position="1"/>
        <end position="45"/>
    </location>
</feature>
<feature type="transmembrane region" description="Helical" evidence="1">
    <location>
        <begin position="46"/>
        <end position="66"/>
    </location>
</feature>
<feature type="topological domain" description="Lumenal" evidence="1">
    <location>
        <position position="67"/>
    </location>
</feature>
<feature type="transmembrane region" description="Helical" evidence="1">
    <location>
        <begin position="68"/>
        <end position="88"/>
    </location>
</feature>
<feature type="topological domain" description="Cytoplasmic" evidence="1">
    <location>
        <begin position="89"/>
        <end position="108"/>
    </location>
</feature>
<feature type="transmembrane region" description="Helical" evidence="1">
    <location>
        <begin position="109"/>
        <end position="129"/>
    </location>
</feature>
<feature type="topological domain" description="Lumenal" evidence="1">
    <location>
        <begin position="130"/>
        <end position="135"/>
    </location>
</feature>
<feature type="transmembrane region" description="Helical" evidence="1">
    <location>
        <begin position="136"/>
        <end position="156"/>
    </location>
</feature>
<feature type="topological domain" description="Cytoplasmic" evidence="1">
    <location>
        <begin position="157"/>
        <end position="170"/>
    </location>
</feature>
<feature type="transmembrane region" description="Helical" evidence="1">
    <location>
        <begin position="171"/>
        <end position="191"/>
    </location>
</feature>
<feature type="topological domain" description="Lumenal" evidence="1">
    <location>
        <begin position="192"/>
        <end position="198"/>
    </location>
</feature>
<feature type="transmembrane region" description="Helical" evidence="1">
    <location>
        <begin position="199"/>
        <end position="217"/>
    </location>
</feature>
<feature type="topological domain" description="Cytoplasmic" evidence="1">
    <location>
        <begin position="218"/>
        <end position="219"/>
    </location>
</feature>
<feature type="modified residue" description="Phosphoserine" evidence="5">
    <location>
        <position position="16"/>
    </location>
</feature>
<proteinExistence type="evidence at protein level"/>
<gene>
    <name type="primary">GPI11</name>
    <name type="ordered locus">YDR302W</name>
</gene>
<reference key="1">
    <citation type="journal article" date="1997" name="Nature">
        <title>The nucleotide sequence of Saccharomyces cerevisiae chromosome IV.</title>
        <authorList>
            <person name="Jacq C."/>
            <person name="Alt-Moerbe J."/>
            <person name="Andre B."/>
            <person name="Arnold W."/>
            <person name="Bahr A."/>
            <person name="Ballesta J.P.G."/>
            <person name="Bargues M."/>
            <person name="Baron L."/>
            <person name="Becker A."/>
            <person name="Biteau N."/>
            <person name="Bloecker H."/>
            <person name="Blugeon C."/>
            <person name="Boskovic J."/>
            <person name="Brandt P."/>
            <person name="Brueckner M."/>
            <person name="Buitrago M.J."/>
            <person name="Coster F."/>
            <person name="Delaveau T."/>
            <person name="del Rey F."/>
            <person name="Dujon B."/>
            <person name="Eide L.G."/>
            <person name="Garcia-Cantalejo J.M."/>
            <person name="Goffeau A."/>
            <person name="Gomez-Peris A."/>
            <person name="Granotier C."/>
            <person name="Hanemann V."/>
            <person name="Hankeln T."/>
            <person name="Hoheisel J.D."/>
            <person name="Jaeger W."/>
            <person name="Jimenez A."/>
            <person name="Jonniaux J.-L."/>
            <person name="Kraemer C."/>
            <person name="Kuester H."/>
            <person name="Laamanen P."/>
            <person name="Legros Y."/>
            <person name="Louis E.J."/>
            <person name="Moeller-Rieker S."/>
            <person name="Monnet A."/>
            <person name="Moro M."/>
            <person name="Mueller-Auer S."/>
            <person name="Nussbaumer B."/>
            <person name="Paricio N."/>
            <person name="Paulin L."/>
            <person name="Perea J."/>
            <person name="Perez-Alonso M."/>
            <person name="Perez-Ortin J.E."/>
            <person name="Pohl T.M."/>
            <person name="Prydz H."/>
            <person name="Purnelle B."/>
            <person name="Rasmussen S.W."/>
            <person name="Remacha M.A."/>
            <person name="Revuelta J.L."/>
            <person name="Rieger M."/>
            <person name="Salom D."/>
            <person name="Saluz H.P."/>
            <person name="Saiz J.E."/>
            <person name="Saren A.-M."/>
            <person name="Schaefer M."/>
            <person name="Scharfe M."/>
            <person name="Schmidt E.R."/>
            <person name="Schneider C."/>
            <person name="Scholler P."/>
            <person name="Schwarz S."/>
            <person name="Soler-Mira A."/>
            <person name="Urrestarazu L.A."/>
            <person name="Verhasselt P."/>
            <person name="Vissers S."/>
            <person name="Voet M."/>
            <person name="Volckaert G."/>
            <person name="Wagner G."/>
            <person name="Wambutt R."/>
            <person name="Wedler E."/>
            <person name="Wedler H."/>
            <person name="Woelfl S."/>
            <person name="Harris D.E."/>
            <person name="Bowman S."/>
            <person name="Brown D."/>
            <person name="Churcher C.M."/>
            <person name="Connor R."/>
            <person name="Dedman K."/>
            <person name="Gentles S."/>
            <person name="Hamlin N."/>
            <person name="Hunt S."/>
            <person name="Jones L."/>
            <person name="McDonald S."/>
            <person name="Murphy L.D."/>
            <person name="Niblett D."/>
            <person name="Odell C."/>
            <person name="Oliver K."/>
            <person name="Rajandream M.A."/>
            <person name="Richards C."/>
            <person name="Shore L."/>
            <person name="Walsh S.V."/>
            <person name="Barrell B.G."/>
            <person name="Dietrich F.S."/>
            <person name="Mulligan J.T."/>
            <person name="Allen E."/>
            <person name="Araujo R."/>
            <person name="Aviles E."/>
            <person name="Berno A."/>
            <person name="Carpenter J."/>
            <person name="Chen E."/>
            <person name="Cherry J.M."/>
            <person name="Chung E."/>
            <person name="Duncan M."/>
            <person name="Hunicke-Smith S."/>
            <person name="Hyman R.W."/>
            <person name="Komp C."/>
            <person name="Lashkari D."/>
            <person name="Lew H."/>
            <person name="Lin D."/>
            <person name="Mosedale D."/>
            <person name="Nakahara K."/>
            <person name="Namath A."/>
            <person name="Oefner P."/>
            <person name="Oh C."/>
            <person name="Petel F.X."/>
            <person name="Roberts D."/>
            <person name="Schramm S."/>
            <person name="Schroeder M."/>
            <person name="Shogren T."/>
            <person name="Shroff N."/>
            <person name="Winant A."/>
            <person name="Yelton M.A."/>
            <person name="Botstein D."/>
            <person name="Davis R.W."/>
            <person name="Johnston M."/>
            <person name="Andrews S."/>
            <person name="Brinkman R."/>
            <person name="Cooper J."/>
            <person name="Ding H."/>
            <person name="Du Z."/>
            <person name="Favello A."/>
            <person name="Fulton L."/>
            <person name="Gattung S."/>
            <person name="Greco T."/>
            <person name="Hallsworth K."/>
            <person name="Hawkins J."/>
            <person name="Hillier L.W."/>
            <person name="Jier M."/>
            <person name="Johnson D."/>
            <person name="Johnston L."/>
            <person name="Kirsten J."/>
            <person name="Kucaba T."/>
            <person name="Langston Y."/>
            <person name="Latreille P."/>
            <person name="Le T."/>
            <person name="Mardis E."/>
            <person name="Menezes S."/>
            <person name="Miller N."/>
            <person name="Nhan M."/>
            <person name="Pauley A."/>
            <person name="Peluso D."/>
            <person name="Rifkin L."/>
            <person name="Riles L."/>
            <person name="Taich A."/>
            <person name="Trevaskis E."/>
            <person name="Vignati D."/>
            <person name="Wilcox L."/>
            <person name="Wohldman P."/>
            <person name="Vaudin M."/>
            <person name="Wilson R."/>
            <person name="Waterston R."/>
            <person name="Albermann K."/>
            <person name="Hani J."/>
            <person name="Heumann K."/>
            <person name="Kleine K."/>
            <person name="Mewes H.-W."/>
            <person name="Zollner A."/>
            <person name="Zaccaria P."/>
        </authorList>
    </citation>
    <scope>NUCLEOTIDE SEQUENCE [LARGE SCALE GENOMIC DNA]</scope>
    <source>
        <strain>ATCC 204508 / S288c</strain>
    </source>
</reference>
<reference key="2">
    <citation type="journal article" date="2014" name="G3 (Bethesda)">
        <title>The reference genome sequence of Saccharomyces cerevisiae: Then and now.</title>
        <authorList>
            <person name="Engel S.R."/>
            <person name="Dietrich F.S."/>
            <person name="Fisk D.G."/>
            <person name="Binkley G."/>
            <person name="Balakrishnan R."/>
            <person name="Costanzo M.C."/>
            <person name="Dwight S.S."/>
            <person name="Hitz B.C."/>
            <person name="Karra K."/>
            <person name="Nash R.S."/>
            <person name="Weng S."/>
            <person name="Wong E.D."/>
            <person name="Lloyd P."/>
            <person name="Skrzypek M.S."/>
            <person name="Miyasato S.R."/>
            <person name="Simison M."/>
            <person name="Cherry J.M."/>
        </authorList>
    </citation>
    <scope>GENOME REANNOTATION</scope>
    <source>
        <strain>ATCC 204508 / S288c</strain>
    </source>
</reference>
<reference key="3">
    <citation type="journal article" date="2000" name="Mol. Biol. Cell">
        <title>Glycosylphosphatidylinositol biosynthesis defects in Gpi11p- and Gpi13p-deficient yeast suggest a branched pathway and implicate gpi13p in phosphoethanolamine transfer to the third mannose.</title>
        <authorList>
            <person name="Taron C.H."/>
            <person name="Wiedman J.M."/>
            <person name="Grimme S.J."/>
            <person name="Orlean P."/>
        </authorList>
    </citation>
    <scope>FUNCTION</scope>
</reference>
<reference key="4">
    <citation type="journal article" date="2003" name="Nature">
        <title>Global analysis of protein localization in budding yeast.</title>
        <authorList>
            <person name="Huh W.-K."/>
            <person name="Falvo J.V."/>
            <person name="Gerke L.C."/>
            <person name="Carroll A.S."/>
            <person name="Howson R.W."/>
            <person name="Weissman J.S."/>
            <person name="O'Shea E.K."/>
        </authorList>
    </citation>
    <scope>SUBCELLULAR LOCATION [LARGE SCALE ANALYSIS]</scope>
</reference>
<reference key="5">
    <citation type="journal article" date="2006" name="Proc. Natl. Acad. Sci. U.S.A.">
        <title>A global topology map of the Saccharomyces cerevisiae membrane proteome.</title>
        <authorList>
            <person name="Kim H."/>
            <person name="Melen K."/>
            <person name="Oesterberg M."/>
            <person name="von Heijne G."/>
        </authorList>
    </citation>
    <scope>TOPOLOGY [LARGE SCALE ANALYSIS]</scope>
    <source>
        <strain>ATCC 208353 / W303-1A</strain>
    </source>
</reference>
<reference key="6">
    <citation type="journal article" date="2007" name="J. Proteome Res.">
        <title>Large-scale phosphorylation analysis of alpha-factor-arrested Saccharomyces cerevisiae.</title>
        <authorList>
            <person name="Li X."/>
            <person name="Gerber S.A."/>
            <person name="Rudner A.D."/>
            <person name="Beausoleil S.A."/>
            <person name="Haas W."/>
            <person name="Villen J."/>
            <person name="Elias J.E."/>
            <person name="Gygi S.P."/>
        </authorList>
    </citation>
    <scope>IDENTIFICATION BY MASS SPECTROMETRY [LARGE SCALE ANALYSIS]</scope>
    <source>
        <strain>ADR376</strain>
    </source>
</reference>
<reference key="7">
    <citation type="journal article" date="2008" name="Mol. Cell. Proteomics">
        <title>A multidimensional chromatography technology for in-depth phosphoproteome analysis.</title>
        <authorList>
            <person name="Albuquerque C.P."/>
            <person name="Smolka M.B."/>
            <person name="Payne S.H."/>
            <person name="Bafna V."/>
            <person name="Eng J."/>
            <person name="Zhou H."/>
        </authorList>
    </citation>
    <scope>IDENTIFICATION BY MASS SPECTROMETRY [LARGE SCALE ANALYSIS]</scope>
</reference>
<reference key="8">
    <citation type="journal article" date="2009" name="Science">
        <title>Global analysis of Cdk1 substrate phosphorylation sites provides insights into evolution.</title>
        <authorList>
            <person name="Holt L.J."/>
            <person name="Tuch B.B."/>
            <person name="Villen J."/>
            <person name="Johnson A.D."/>
            <person name="Gygi S.P."/>
            <person name="Morgan D.O."/>
        </authorList>
    </citation>
    <scope>PHOSPHORYLATION [LARGE SCALE ANALYSIS] AT SER-16</scope>
    <scope>IDENTIFICATION BY MASS SPECTROMETRY [LARGE SCALE ANALYSIS]</scope>
</reference>
<name>GPI11_YEAST</name>
<dbReference type="EMBL" id="U28374">
    <property type="protein sequence ID" value="AAB64738.1"/>
    <property type="molecule type" value="Genomic_DNA"/>
</dbReference>
<dbReference type="EMBL" id="BK006938">
    <property type="protein sequence ID" value="DAA12141.1"/>
    <property type="molecule type" value="Genomic_DNA"/>
</dbReference>
<dbReference type="PIR" id="S61188">
    <property type="entry name" value="S61188"/>
</dbReference>
<dbReference type="RefSeq" id="NP_010588.1">
    <property type="nucleotide sequence ID" value="NM_001180610.1"/>
</dbReference>
<dbReference type="BioGRID" id="32354">
    <property type="interactions" value="720"/>
</dbReference>
<dbReference type="ComplexPortal" id="CPX-2678">
    <property type="entry name" value="Glycosylphosphatidylinsitol ethanolamine-phosphate transferase II complex"/>
</dbReference>
<dbReference type="ComplexPortal" id="CPX-2680">
    <property type="entry name" value="Glycosylphosphatidylinsitol ethanolamine-phosphate transferase III complex"/>
</dbReference>
<dbReference type="FunCoup" id="Q06636">
    <property type="interactions" value="189"/>
</dbReference>
<dbReference type="IntAct" id="Q06636">
    <property type="interactions" value="5"/>
</dbReference>
<dbReference type="STRING" id="4932.YDR302W"/>
<dbReference type="iPTMnet" id="Q06636"/>
<dbReference type="PaxDb" id="4932-YDR302W"/>
<dbReference type="PeptideAtlas" id="Q06636"/>
<dbReference type="EnsemblFungi" id="YDR302W_mRNA">
    <property type="protein sequence ID" value="YDR302W"/>
    <property type="gene ID" value="YDR302W"/>
</dbReference>
<dbReference type="GeneID" id="851896"/>
<dbReference type="KEGG" id="sce:YDR302W"/>
<dbReference type="AGR" id="SGD:S000002710"/>
<dbReference type="SGD" id="S000002710">
    <property type="gene designation" value="GPI11"/>
</dbReference>
<dbReference type="VEuPathDB" id="FungiDB:YDR302W"/>
<dbReference type="eggNOG" id="KOG3144">
    <property type="taxonomic scope" value="Eukaryota"/>
</dbReference>
<dbReference type="GeneTree" id="ENSGT00390000016617"/>
<dbReference type="HOGENOM" id="CLU_111662_0_0_1"/>
<dbReference type="InParanoid" id="Q06636"/>
<dbReference type="OMA" id="FNCDFKV"/>
<dbReference type="OrthoDB" id="17366at2759"/>
<dbReference type="BioCyc" id="YEAST:G3O-29862-MONOMER"/>
<dbReference type="Reactome" id="R-SCE-162710">
    <property type="pathway name" value="Synthesis of glycosylphosphatidylinositol (GPI)"/>
</dbReference>
<dbReference type="UniPathway" id="UPA00196"/>
<dbReference type="BioGRID-ORCS" id="851896">
    <property type="hits" value="8 hits in 10 CRISPR screens"/>
</dbReference>
<dbReference type="PRO" id="PR:Q06636"/>
<dbReference type="Proteomes" id="UP000002311">
    <property type="component" value="Chromosome IV"/>
</dbReference>
<dbReference type="RNAct" id="Q06636">
    <property type="molecule type" value="protein"/>
</dbReference>
<dbReference type="GO" id="GO:0005783">
    <property type="term" value="C:endoplasmic reticulum"/>
    <property type="evidence" value="ECO:0007005"/>
    <property type="project" value="SGD"/>
</dbReference>
<dbReference type="GO" id="GO:0005789">
    <property type="term" value="C:endoplasmic reticulum membrane"/>
    <property type="evidence" value="ECO:0007669"/>
    <property type="project" value="UniProtKB-SubCell"/>
</dbReference>
<dbReference type="GO" id="GO:0051377">
    <property type="term" value="F:mannose-ethanolamine phosphotransferase activity"/>
    <property type="evidence" value="ECO:0000315"/>
    <property type="project" value="SGD"/>
</dbReference>
<dbReference type="GO" id="GO:0006506">
    <property type="term" value="P:GPI anchor biosynthetic process"/>
    <property type="evidence" value="ECO:0000315"/>
    <property type="project" value="SGD"/>
</dbReference>
<dbReference type="InterPro" id="IPR009580">
    <property type="entry name" value="GPI_biosynthesis_protein_Pig-F"/>
</dbReference>
<dbReference type="Pfam" id="PF06699">
    <property type="entry name" value="PIG-F"/>
    <property type="match status" value="1"/>
</dbReference>
<comment type="function">
    <text evidence="2">Acts in the GPI biosynthetic pathway between GlcNAc-PI synthesis and GPI transfer to protein. Required for the formation of complete GPI precursors CP1 and CP2.</text>
</comment>
<comment type="pathway">
    <text>Glycolipid biosynthesis; glycosylphosphatidylinositol-anchor biosynthesis.</text>
</comment>
<comment type="subcellular location">
    <subcellularLocation>
        <location evidence="3">Endoplasmic reticulum membrane</location>
        <topology evidence="3">Multi-pass membrane protein</topology>
    </subcellularLocation>
</comment>
<comment type="similarity">
    <text evidence="4">Belongs to the PIGF family.</text>
</comment>
<protein>
    <recommendedName>
        <fullName>Glycosylphosphatidylinositol anchor biosynthesis protein 11</fullName>
    </recommendedName>
    <alternativeName>
        <fullName>PIGF homolog</fullName>
    </alternativeName>
</protein>
<keyword id="KW-0256">Endoplasmic reticulum</keyword>
<keyword id="KW-0337">GPI-anchor biosynthesis</keyword>
<keyword id="KW-0472">Membrane</keyword>
<keyword id="KW-0597">Phosphoprotein</keyword>
<keyword id="KW-1185">Reference proteome</keyword>
<keyword id="KW-0812">Transmembrane</keyword>
<keyword id="KW-1133">Transmembrane helix</keyword>
<organism>
    <name type="scientific">Saccharomyces cerevisiae (strain ATCC 204508 / S288c)</name>
    <name type="common">Baker's yeast</name>
    <dbReference type="NCBI Taxonomy" id="559292"/>
    <lineage>
        <taxon>Eukaryota</taxon>
        <taxon>Fungi</taxon>
        <taxon>Dikarya</taxon>
        <taxon>Ascomycota</taxon>
        <taxon>Saccharomycotina</taxon>
        <taxon>Saccharomycetes</taxon>
        <taxon>Saccharomycetales</taxon>
        <taxon>Saccharomycetaceae</taxon>
        <taxon>Saccharomyces</taxon>
    </lineage>
</organism>
<evidence type="ECO:0000255" key="1"/>
<evidence type="ECO:0000269" key="2">
    <source>
    </source>
</evidence>
<evidence type="ECO:0000269" key="3">
    <source>
    </source>
</evidence>
<evidence type="ECO:0000305" key="4"/>
<evidence type="ECO:0007744" key="5">
    <source>
    </source>
</evidence>
<accession>Q06636</accession>
<accession>D6VST1</accession>
<sequence>MPAKKRTRKTVKKTVSFSDDTTLTTHQNREKKNVDHDRPPVYVRKTPLMTFPYHLVALLYYYVFVSSNFNTVKLLSFLIPTQVAYLVLQFNKCTVYGNKIIKINYSLTIICLGVTFLLSFPTMLLTILFGAPLMDLLWETWLLSLHFAFLAYPAVYSVFNCDFKVGLWKKYFIFIVVGGWISCVVIPLDWDRDWQNWPIPIVVGGYLGALVGYTIGAYI</sequence>